<proteinExistence type="inferred from homology"/>
<dbReference type="EMBL" id="CP001101">
    <property type="protein sequence ID" value="ACE03927.1"/>
    <property type="molecule type" value="Genomic_DNA"/>
</dbReference>
<dbReference type="SMR" id="B3EPZ5"/>
<dbReference type="STRING" id="331678.Cphamn1_0984"/>
<dbReference type="KEGG" id="cpb:Cphamn1_0984"/>
<dbReference type="eggNOG" id="COG1825">
    <property type="taxonomic scope" value="Bacteria"/>
</dbReference>
<dbReference type="HOGENOM" id="CLU_075939_2_1_10"/>
<dbReference type="OrthoDB" id="9786489at2"/>
<dbReference type="GO" id="GO:0022625">
    <property type="term" value="C:cytosolic large ribosomal subunit"/>
    <property type="evidence" value="ECO:0007669"/>
    <property type="project" value="TreeGrafter"/>
</dbReference>
<dbReference type="GO" id="GO:0008097">
    <property type="term" value="F:5S rRNA binding"/>
    <property type="evidence" value="ECO:0007669"/>
    <property type="project" value="InterPro"/>
</dbReference>
<dbReference type="GO" id="GO:0003735">
    <property type="term" value="F:structural constituent of ribosome"/>
    <property type="evidence" value="ECO:0007669"/>
    <property type="project" value="InterPro"/>
</dbReference>
<dbReference type="GO" id="GO:0006412">
    <property type="term" value="P:translation"/>
    <property type="evidence" value="ECO:0007669"/>
    <property type="project" value="UniProtKB-UniRule"/>
</dbReference>
<dbReference type="CDD" id="cd00495">
    <property type="entry name" value="Ribosomal_L25_TL5_CTC"/>
    <property type="match status" value="1"/>
</dbReference>
<dbReference type="Gene3D" id="2.170.120.20">
    <property type="entry name" value="Ribosomal protein L25, beta domain"/>
    <property type="match status" value="1"/>
</dbReference>
<dbReference type="Gene3D" id="2.40.240.10">
    <property type="entry name" value="Ribosomal Protein L25, Chain P"/>
    <property type="match status" value="1"/>
</dbReference>
<dbReference type="HAMAP" id="MF_01334">
    <property type="entry name" value="Ribosomal_bL25_CTC"/>
    <property type="match status" value="1"/>
</dbReference>
<dbReference type="InterPro" id="IPR020056">
    <property type="entry name" value="Rbsml_bL25/Gln-tRNA_synth_N"/>
</dbReference>
<dbReference type="InterPro" id="IPR011035">
    <property type="entry name" value="Ribosomal_bL25/Gln-tRNA_synth"/>
</dbReference>
<dbReference type="InterPro" id="IPR020057">
    <property type="entry name" value="Ribosomal_bL25_b-dom"/>
</dbReference>
<dbReference type="InterPro" id="IPR037121">
    <property type="entry name" value="Ribosomal_bL25_C"/>
</dbReference>
<dbReference type="InterPro" id="IPR001021">
    <property type="entry name" value="Ribosomal_bL25_long"/>
</dbReference>
<dbReference type="InterPro" id="IPR029751">
    <property type="entry name" value="Ribosomal_L25_dom"/>
</dbReference>
<dbReference type="InterPro" id="IPR020930">
    <property type="entry name" value="Ribosomal_uL5_bac-type"/>
</dbReference>
<dbReference type="NCBIfam" id="TIGR00731">
    <property type="entry name" value="bL25_bact_ctc"/>
    <property type="match status" value="1"/>
</dbReference>
<dbReference type="NCBIfam" id="NF004136">
    <property type="entry name" value="PRK05618.3-2"/>
    <property type="match status" value="1"/>
</dbReference>
<dbReference type="PANTHER" id="PTHR33284">
    <property type="entry name" value="RIBOSOMAL PROTEIN L25/GLN-TRNA SYNTHETASE, ANTI-CODON-BINDING DOMAIN-CONTAINING PROTEIN"/>
    <property type="match status" value="1"/>
</dbReference>
<dbReference type="PANTHER" id="PTHR33284:SF1">
    <property type="entry name" value="RIBOSOMAL PROTEIN L25_GLN-TRNA SYNTHETASE, ANTI-CODON-BINDING DOMAIN-CONTAINING PROTEIN"/>
    <property type="match status" value="1"/>
</dbReference>
<dbReference type="Pfam" id="PF01386">
    <property type="entry name" value="Ribosomal_L25p"/>
    <property type="match status" value="1"/>
</dbReference>
<dbReference type="Pfam" id="PF14693">
    <property type="entry name" value="Ribosomal_TL5_C"/>
    <property type="match status" value="1"/>
</dbReference>
<dbReference type="SUPFAM" id="SSF50715">
    <property type="entry name" value="Ribosomal protein L25-like"/>
    <property type="match status" value="1"/>
</dbReference>
<evidence type="ECO:0000255" key="1">
    <source>
        <dbReference type="HAMAP-Rule" id="MF_01334"/>
    </source>
</evidence>
<evidence type="ECO:0000305" key="2"/>
<feature type="chain" id="PRO_1000142503" description="Large ribosomal subunit protein bL25">
    <location>
        <begin position="1"/>
        <end position="209"/>
    </location>
</feature>
<name>RL25_CHLPB</name>
<protein>
    <recommendedName>
        <fullName evidence="1">Large ribosomal subunit protein bL25</fullName>
    </recommendedName>
    <alternativeName>
        <fullName evidence="2">50S ribosomal protein L25</fullName>
    </alternativeName>
    <alternativeName>
        <fullName evidence="1">General stress protein CTC</fullName>
    </alternativeName>
</protein>
<organism>
    <name type="scientific">Chlorobium phaeobacteroides (strain BS1)</name>
    <dbReference type="NCBI Taxonomy" id="331678"/>
    <lineage>
        <taxon>Bacteria</taxon>
        <taxon>Pseudomonadati</taxon>
        <taxon>Chlorobiota</taxon>
        <taxon>Chlorobiia</taxon>
        <taxon>Chlorobiales</taxon>
        <taxon>Chlorobiaceae</taxon>
        <taxon>Chlorobium/Pelodictyon group</taxon>
        <taxon>Chlorobium</taxon>
    </lineage>
</organism>
<sequence length="209" mass="23077">MESIVFNVEPRDCDKNAAKKLRDQGKVPAVVYHKGEETIHICVDERSLKKLVHSSESHLIDLTFPDGKEKRSFLKEVQFDPVTDKIIHADFQFFSAGEVLEMDVPTTFIGEGEAPGVVAGGNVQVILHSLKVKAVPSNIPQHITIDVSGMELGQTMHIREIPVETYEGKFEIISDPDSSVVSIVAPKVEAEVIESEEEEETPAVASEEE</sequence>
<gene>
    <name evidence="1" type="primary">rplY</name>
    <name evidence="1" type="synonym">ctc</name>
    <name type="ordered locus">Cphamn1_0984</name>
</gene>
<reference key="1">
    <citation type="submission" date="2008-06" db="EMBL/GenBank/DDBJ databases">
        <title>Complete sequence of Chlorobium phaeobacteroides BS1.</title>
        <authorList>
            <consortium name="US DOE Joint Genome Institute"/>
            <person name="Lucas S."/>
            <person name="Copeland A."/>
            <person name="Lapidus A."/>
            <person name="Glavina del Rio T."/>
            <person name="Dalin E."/>
            <person name="Tice H."/>
            <person name="Bruce D."/>
            <person name="Goodwin L."/>
            <person name="Pitluck S."/>
            <person name="Schmutz J."/>
            <person name="Larimer F."/>
            <person name="Land M."/>
            <person name="Hauser L."/>
            <person name="Kyrpides N."/>
            <person name="Ovchinnikova G."/>
            <person name="Li T."/>
            <person name="Liu Z."/>
            <person name="Zhao F."/>
            <person name="Overmann J."/>
            <person name="Bryant D.A."/>
            <person name="Richardson P."/>
        </authorList>
    </citation>
    <scope>NUCLEOTIDE SEQUENCE [LARGE SCALE GENOMIC DNA]</scope>
    <source>
        <strain>BS1</strain>
    </source>
</reference>
<keyword id="KW-0687">Ribonucleoprotein</keyword>
<keyword id="KW-0689">Ribosomal protein</keyword>
<keyword id="KW-0694">RNA-binding</keyword>
<keyword id="KW-0699">rRNA-binding</keyword>
<accession>B3EPZ5</accession>
<comment type="function">
    <text evidence="1">This is one of the proteins that binds to the 5S RNA in the ribosome where it forms part of the central protuberance.</text>
</comment>
<comment type="subunit">
    <text evidence="1">Part of the 50S ribosomal subunit; part of the 5S rRNA/L5/L18/L25 subcomplex. Contacts the 5S rRNA. Binds to the 5S rRNA independently of L5 and L18.</text>
</comment>
<comment type="similarity">
    <text evidence="1">Belongs to the bacterial ribosomal protein bL25 family. CTC subfamily.</text>
</comment>